<comment type="function">
    <text evidence="1">Required for the post-translational delivery of tail-anchored (TA) proteins to the endoplasmic reticulum. Together with GET1, acts as a membrane receptor for soluble GET3, which recognizes and selectively binds the transmembrane domain of TA proteins in the cytosol. The GET complex cooperates with the HDEL receptor ERD2 to mediate the ATP-dependent retrieval of resident ER proteins that contain a C-terminal H-D-E-L retention signal from the Golgi to the ER.</text>
</comment>
<comment type="subunit">
    <text evidence="1">Component of the Golgi to ER traffic (GET) complex, which is composed of GET1, GET2 and GET3. Within the complex, GET1 and GET2 form a heterotetramer which is stabilized by phosphatidylinositol binding and which binds to the GET3 homodimer.</text>
</comment>
<comment type="subcellular location">
    <subcellularLocation>
        <location evidence="1">Endoplasmic reticulum membrane</location>
        <topology evidence="1">Multi-pass membrane protein</topology>
    </subcellularLocation>
    <subcellularLocation>
        <location evidence="1">Golgi apparatus membrane</location>
        <topology evidence="1">Multi-pass membrane protein</topology>
    </subcellularLocation>
</comment>
<comment type="similarity">
    <text evidence="1">Belongs to the GET2 family.</text>
</comment>
<dbReference type="EMBL" id="CH672346">
    <property type="protein sequence ID" value="EEQ42252.1"/>
    <property type="molecule type" value="Genomic_DNA"/>
</dbReference>
<dbReference type="SMR" id="P0CB64"/>
<dbReference type="PaxDb" id="5476-P0CB64"/>
<dbReference type="VEuPathDB" id="FungiDB:CAWG_00456"/>
<dbReference type="HOGENOM" id="CLU_066477_0_0_1"/>
<dbReference type="OMA" id="QYWDVLS"/>
<dbReference type="OrthoDB" id="14857at766764"/>
<dbReference type="Proteomes" id="UP000001429">
    <property type="component" value="Chromosome 1, Supercontig 1.1"/>
</dbReference>
<dbReference type="GO" id="GO:0005789">
    <property type="term" value="C:endoplasmic reticulum membrane"/>
    <property type="evidence" value="ECO:0007669"/>
    <property type="project" value="UniProtKB-SubCell"/>
</dbReference>
<dbReference type="GO" id="GO:0043529">
    <property type="term" value="C:GET complex"/>
    <property type="evidence" value="ECO:0007669"/>
    <property type="project" value="UniProtKB-UniRule"/>
</dbReference>
<dbReference type="GO" id="GO:0000139">
    <property type="term" value="C:Golgi membrane"/>
    <property type="evidence" value="ECO:0007669"/>
    <property type="project" value="UniProtKB-SubCell"/>
</dbReference>
<dbReference type="GO" id="GO:0045048">
    <property type="term" value="P:protein insertion into ER membrane"/>
    <property type="evidence" value="ECO:0007669"/>
    <property type="project" value="UniProtKB-UniRule"/>
</dbReference>
<dbReference type="GO" id="GO:0006890">
    <property type="term" value="P:retrograde vesicle-mediated transport, Golgi to endoplasmic reticulum"/>
    <property type="evidence" value="ECO:0007669"/>
    <property type="project" value="TreeGrafter"/>
</dbReference>
<dbReference type="HAMAP" id="MF_03114">
    <property type="entry name" value="Get2"/>
    <property type="match status" value="1"/>
</dbReference>
<dbReference type="InterPro" id="IPR014802">
    <property type="entry name" value="GET2"/>
</dbReference>
<dbReference type="InterPro" id="IPR028143">
    <property type="entry name" value="Get2/sif1"/>
</dbReference>
<dbReference type="PANTHER" id="PTHR28263">
    <property type="entry name" value="GOLGI TO ER TRAFFIC PROTEIN 2"/>
    <property type="match status" value="1"/>
</dbReference>
<dbReference type="PANTHER" id="PTHR28263:SF1">
    <property type="entry name" value="GOLGI TO ER TRAFFIC PROTEIN 2"/>
    <property type="match status" value="1"/>
</dbReference>
<dbReference type="Pfam" id="PF08690">
    <property type="entry name" value="GET2"/>
    <property type="match status" value="1"/>
</dbReference>
<reference key="1">
    <citation type="journal article" date="2009" name="Nature">
        <title>Evolution of pathogenicity and sexual reproduction in eight Candida genomes.</title>
        <authorList>
            <person name="Butler G."/>
            <person name="Rasmussen M.D."/>
            <person name="Lin M.F."/>
            <person name="Santos M.A.S."/>
            <person name="Sakthikumar S."/>
            <person name="Munro C.A."/>
            <person name="Rheinbay E."/>
            <person name="Grabherr M."/>
            <person name="Forche A."/>
            <person name="Reedy J.L."/>
            <person name="Agrafioti I."/>
            <person name="Arnaud M.B."/>
            <person name="Bates S."/>
            <person name="Brown A.J.P."/>
            <person name="Brunke S."/>
            <person name="Costanzo M.C."/>
            <person name="Fitzpatrick D.A."/>
            <person name="de Groot P.W.J."/>
            <person name="Harris D."/>
            <person name="Hoyer L.L."/>
            <person name="Hube B."/>
            <person name="Klis F.M."/>
            <person name="Kodira C."/>
            <person name="Lennard N."/>
            <person name="Logue M.E."/>
            <person name="Martin R."/>
            <person name="Neiman A.M."/>
            <person name="Nikolaou E."/>
            <person name="Quail M.A."/>
            <person name="Quinn J."/>
            <person name="Santos M.C."/>
            <person name="Schmitzberger F.F."/>
            <person name="Sherlock G."/>
            <person name="Shah P."/>
            <person name="Silverstein K.A.T."/>
            <person name="Skrzypek M.S."/>
            <person name="Soll D."/>
            <person name="Staggs R."/>
            <person name="Stansfield I."/>
            <person name="Stumpf M.P.H."/>
            <person name="Sudbery P.E."/>
            <person name="Srikantha T."/>
            <person name="Zeng Q."/>
            <person name="Berman J."/>
            <person name="Berriman M."/>
            <person name="Heitman J."/>
            <person name="Gow N.A.R."/>
            <person name="Lorenz M.C."/>
            <person name="Birren B.W."/>
            <person name="Kellis M."/>
            <person name="Cuomo C.A."/>
        </authorList>
    </citation>
    <scope>NUCLEOTIDE SEQUENCE [LARGE SCALE GENOMIC DNA]</scope>
    <source>
        <strain>WO-1</strain>
    </source>
</reference>
<keyword id="KW-0256">Endoplasmic reticulum</keyword>
<keyword id="KW-0931">ER-Golgi transport</keyword>
<keyword id="KW-0333">Golgi apparatus</keyword>
<keyword id="KW-0472">Membrane</keyword>
<keyword id="KW-0812">Transmembrane</keyword>
<keyword id="KW-1133">Transmembrane helix</keyword>
<keyword id="KW-0813">Transport</keyword>
<gene>
    <name evidence="1" type="primary">GET2</name>
    <name type="ORF">CAWG_00456</name>
</gene>
<feature type="chain" id="PRO_0000388625" description="Golgi to ER traffic protein 2">
    <location>
        <begin position="1"/>
        <end position="298"/>
    </location>
</feature>
<feature type="topological domain" description="Cytoplasmic" evidence="1">
    <location>
        <begin position="1"/>
        <end position="164"/>
    </location>
</feature>
<feature type="transmembrane region" description="Helical" evidence="1">
    <location>
        <begin position="165"/>
        <end position="185"/>
    </location>
</feature>
<feature type="topological domain" description="Lumenal" evidence="1">
    <location>
        <begin position="186"/>
        <end position="211"/>
    </location>
</feature>
<feature type="transmembrane region" description="Helical" evidence="1">
    <location>
        <begin position="212"/>
        <end position="231"/>
    </location>
</feature>
<feature type="topological domain" description="Cytoplasmic" evidence="1">
    <location>
        <begin position="232"/>
        <end position="275"/>
    </location>
</feature>
<feature type="transmembrane region" description="Helical" evidence="1">
    <location>
        <begin position="276"/>
        <end position="296"/>
    </location>
</feature>
<feature type="topological domain" description="Lumenal" evidence="1">
    <location>
        <begin position="297"/>
        <end position="298"/>
    </location>
</feature>
<feature type="region of interest" description="Disordered" evidence="2">
    <location>
        <begin position="40"/>
        <end position="92"/>
    </location>
</feature>
<feature type="compositionally biased region" description="Low complexity" evidence="2">
    <location>
        <begin position="42"/>
        <end position="55"/>
    </location>
</feature>
<feature type="compositionally biased region" description="Basic and acidic residues" evidence="2">
    <location>
        <begin position="56"/>
        <end position="67"/>
    </location>
</feature>
<accession>P0CB64</accession>
<accession>Q5APC6</accession>
<name>GET2_CANAW</name>
<organism>
    <name type="scientific">Candida albicans (strain WO-1)</name>
    <name type="common">Yeast</name>
    <dbReference type="NCBI Taxonomy" id="294748"/>
    <lineage>
        <taxon>Eukaryota</taxon>
        <taxon>Fungi</taxon>
        <taxon>Dikarya</taxon>
        <taxon>Ascomycota</taxon>
        <taxon>Saccharomycotina</taxon>
        <taxon>Pichiomycetes</taxon>
        <taxon>Debaryomycetaceae</taxon>
        <taxon>Candida/Lodderomyces clade</taxon>
        <taxon>Candida</taxon>
    </lineage>
</organism>
<proteinExistence type="inferred from homology"/>
<evidence type="ECO:0000255" key="1">
    <source>
        <dbReference type="HAMAP-Rule" id="MF_03114"/>
    </source>
</evidence>
<evidence type="ECO:0000256" key="2">
    <source>
        <dbReference type="SAM" id="MobiDB-lite"/>
    </source>
</evidence>
<protein>
    <recommendedName>
        <fullName evidence="1">Golgi to ER traffic protein 2</fullName>
    </recommendedName>
</protein>
<sequence length="298" mass="33632">MSEPVVDTAELSAEEKKRLLRERRQAKMSKGKATARLNDILSQGSSVKTSGVKSVLDQEKEATPSHDEDPEIQDITEITTPPPRTPPIGEDAPQDIDKIFQSMLQQQGQGADTAGDPFAQIMKMFNQVEGGDSPPSESATSTQDPAELKYRQELLEYNTYNQKLWKFRFLLVRVSVTLFNFFYHYINLSNFHASNYAYVRDLSSEKYPVRDFFTWFATTEVVLVAAYYSIFHSLGLFHAANQNSFVLKAMSMGSMVLPQLEHYKPLVARFLGYYELLGIVLGDLSLVIVLFGLLSFAN</sequence>